<protein>
    <recommendedName>
        <fullName evidence="1">Formate-dependent phosphoribosylglycinamide formyltransferase</fullName>
        <ecNumber evidence="1">6.3.1.21</ecNumber>
    </recommendedName>
    <alternativeName>
        <fullName evidence="1">5'-phosphoribosylglycinamide transformylase 2</fullName>
    </alternativeName>
    <alternativeName>
        <fullName evidence="1">Formate-dependent GAR transformylase</fullName>
    </alternativeName>
    <alternativeName>
        <fullName evidence="1">GAR transformylase 2</fullName>
        <shortName evidence="1">GART 2</shortName>
    </alternativeName>
    <alternativeName>
        <fullName evidence="1">Non-folate glycinamide ribonucleotide transformylase</fullName>
    </alternativeName>
    <alternativeName>
        <fullName evidence="1">Phosphoribosylglycinamide formyltransferase 2</fullName>
    </alternativeName>
</protein>
<dbReference type="EC" id="6.3.1.21" evidence="1"/>
<dbReference type="EMBL" id="CP000926">
    <property type="protein sequence ID" value="ABY96970.1"/>
    <property type="molecule type" value="Genomic_DNA"/>
</dbReference>
<dbReference type="RefSeq" id="WP_012270754.1">
    <property type="nucleotide sequence ID" value="NC_010322.1"/>
</dbReference>
<dbReference type="SMR" id="B0KRH6"/>
<dbReference type="KEGG" id="ppg:PputGB1_1062"/>
<dbReference type="eggNOG" id="COG0027">
    <property type="taxonomic scope" value="Bacteria"/>
</dbReference>
<dbReference type="HOGENOM" id="CLU_011534_1_3_6"/>
<dbReference type="UniPathway" id="UPA00074">
    <property type="reaction ID" value="UER00127"/>
</dbReference>
<dbReference type="Proteomes" id="UP000002157">
    <property type="component" value="Chromosome"/>
</dbReference>
<dbReference type="GO" id="GO:0005829">
    <property type="term" value="C:cytosol"/>
    <property type="evidence" value="ECO:0007669"/>
    <property type="project" value="TreeGrafter"/>
</dbReference>
<dbReference type="GO" id="GO:0005524">
    <property type="term" value="F:ATP binding"/>
    <property type="evidence" value="ECO:0007669"/>
    <property type="project" value="UniProtKB-UniRule"/>
</dbReference>
<dbReference type="GO" id="GO:0000287">
    <property type="term" value="F:magnesium ion binding"/>
    <property type="evidence" value="ECO:0007669"/>
    <property type="project" value="InterPro"/>
</dbReference>
<dbReference type="GO" id="GO:0043815">
    <property type="term" value="F:phosphoribosylglycinamide formyltransferase 2 activity"/>
    <property type="evidence" value="ECO:0007669"/>
    <property type="project" value="UniProtKB-UniRule"/>
</dbReference>
<dbReference type="GO" id="GO:0004644">
    <property type="term" value="F:phosphoribosylglycinamide formyltransferase activity"/>
    <property type="evidence" value="ECO:0007669"/>
    <property type="project" value="InterPro"/>
</dbReference>
<dbReference type="GO" id="GO:0006189">
    <property type="term" value="P:'de novo' IMP biosynthetic process"/>
    <property type="evidence" value="ECO:0007669"/>
    <property type="project" value="UniProtKB-UniRule"/>
</dbReference>
<dbReference type="FunFam" id="3.30.1490.20:FF:000013">
    <property type="entry name" value="Formate-dependent phosphoribosylglycinamide formyltransferase"/>
    <property type="match status" value="1"/>
</dbReference>
<dbReference type="FunFam" id="3.30.470.20:FF:000027">
    <property type="entry name" value="Formate-dependent phosphoribosylglycinamide formyltransferase"/>
    <property type="match status" value="1"/>
</dbReference>
<dbReference type="FunFam" id="3.40.50.20:FF:000007">
    <property type="entry name" value="Formate-dependent phosphoribosylglycinamide formyltransferase"/>
    <property type="match status" value="1"/>
</dbReference>
<dbReference type="Gene3D" id="3.40.50.20">
    <property type="match status" value="1"/>
</dbReference>
<dbReference type="Gene3D" id="3.30.1490.20">
    <property type="entry name" value="ATP-grasp fold, A domain"/>
    <property type="match status" value="1"/>
</dbReference>
<dbReference type="Gene3D" id="3.30.470.20">
    <property type="entry name" value="ATP-grasp fold, B domain"/>
    <property type="match status" value="1"/>
</dbReference>
<dbReference type="HAMAP" id="MF_01643">
    <property type="entry name" value="PurT"/>
    <property type="match status" value="1"/>
</dbReference>
<dbReference type="InterPro" id="IPR011761">
    <property type="entry name" value="ATP-grasp"/>
</dbReference>
<dbReference type="InterPro" id="IPR003135">
    <property type="entry name" value="ATP-grasp_carboxylate-amine"/>
</dbReference>
<dbReference type="InterPro" id="IPR013815">
    <property type="entry name" value="ATP_grasp_subdomain_1"/>
</dbReference>
<dbReference type="InterPro" id="IPR016185">
    <property type="entry name" value="PreATP-grasp_dom_sf"/>
</dbReference>
<dbReference type="InterPro" id="IPR005862">
    <property type="entry name" value="PurT"/>
</dbReference>
<dbReference type="InterPro" id="IPR054350">
    <property type="entry name" value="PurT/PurK_preATP-grasp"/>
</dbReference>
<dbReference type="InterPro" id="IPR048740">
    <property type="entry name" value="PurT_C"/>
</dbReference>
<dbReference type="NCBIfam" id="NF006766">
    <property type="entry name" value="PRK09288.1"/>
    <property type="match status" value="1"/>
</dbReference>
<dbReference type="NCBIfam" id="TIGR01142">
    <property type="entry name" value="purT"/>
    <property type="match status" value="1"/>
</dbReference>
<dbReference type="PANTHER" id="PTHR43055">
    <property type="entry name" value="FORMATE-DEPENDENT PHOSPHORIBOSYLGLYCINAMIDE FORMYLTRANSFERASE"/>
    <property type="match status" value="1"/>
</dbReference>
<dbReference type="PANTHER" id="PTHR43055:SF1">
    <property type="entry name" value="FORMATE-DEPENDENT PHOSPHORIBOSYLGLYCINAMIDE FORMYLTRANSFERASE"/>
    <property type="match status" value="1"/>
</dbReference>
<dbReference type="Pfam" id="PF02222">
    <property type="entry name" value="ATP-grasp"/>
    <property type="match status" value="1"/>
</dbReference>
<dbReference type="Pfam" id="PF21244">
    <property type="entry name" value="PurT_C"/>
    <property type="match status" value="1"/>
</dbReference>
<dbReference type="Pfam" id="PF22660">
    <property type="entry name" value="RS_preATP-grasp-like"/>
    <property type="match status" value="1"/>
</dbReference>
<dbReference type="SUPFAM" id="SSF56059">
    <property type="entry name" value="Glutathione synthetase ATP-binding domain-like"/>
    <property type="match status" value="1"/>
</dbReference>
<dbReference type="SUPFAM" id="SSF52440">
    <property type="entry name" value="PreATP-grasp domain"/>
    <property type="match status" value="1"/>
</dbReference>
<dbReference type="PROSITE" id="PS50975">
    <property type="entry name" value="ATP_GRASP"/>
    <property type="match status" value="1"/>
</dbReference>
<proteinExistence type="inferred from homology"/>
<sequence length="393" mass="42559">MTRIGTPLSPTATRVLLCGCGELGKEVVIELQRLGVEVIAVDRYANAPAMQVAHRSHVVNMLDGVALRAVIEAEKPHYIVPEIEAIATATLVELENEGFNVVPTARATQLTMNREGIRRLAAEELDLPTSPYHFADTFEDYAKAVADVGYPCVVKPVMSSSGKGQSLLRSDADLQKSWDYAQEGGRAGKGRVIVEGFIDFEYEITLLTVRHVGGTTFLEPVGHRQEKGDYQESWQPQAMSPKALAESQRVAKAVTDALGGRGLFGVELFVKGDQVWFSEVSPRPHDTGLVTLISQDLSQFALHARAILGLPIPVVRQFGPSASAVILPEGQSQQTSFANLGAALSEPDTAIRLFGKPEINGTRRMGVCLARDESVELARAKATRASQAVKVEF</sequence>
<name>PURT_PSEPG</name>
<comment type="function">
    <text evidence="1">Involved in the de novo purine biosynthesis. Catalyzes the transfer of formate to 5-phospho-ribosyl-glycinamide (GAR), producing 5-phospho-ribosyl-N-formylglycinamide (FGAR). Formate is provided by PurU via hydrolysis of 10-formyl-tetrahydrofolate.</text>
</comment>
<comment type="catalytic activity">
    <reaction evidence="1">
        <text>N(1)-(5-phospho-beta-D-ribosyl)glycinamide + formate + ATP = N(2)-formyl-N(1)-(5-phospho-beta-D-ribosyl)glycinamide + ADP + phosphate + H(+)</text>
        <dbReference type="Rhea" id="RHEA:24829"/>
        <dbReference type="ChEBI" id="CHEBI:15378"/>
        <dbReference type="ChEBI" id="CHEBI:15740"/>
        <dbReference type="ChEBI" id="CHEBI:30616"/>
        <dbReference type="ChEBI" id="CHEBI:43474"/>
        <dbReference type="ChEBI" id="CHEBI:143788"/>
        <dbReference type="ChEBI" id="CHEBI:147286"/>
        <dbReference type="ChEBI" id="CHEBI:456216"/>
        <dbReference type="EC" id="6.3.1.21"/>
    </reaction>
    <physiologicalReaction direction="left-to-right" evidence="1">
        <dbReference type="Rhea" id="RHEA:24830"/>
    </physiologicalReaction>
</comment>
<comment type="pathway">
    <text evidence="1">Purine metabolism; IMP biosynthesis via de novo pathway; N(2)-formyl-N(1)-(5-phospho-D-ribosyl)glycinamide from N(1)-(5-phospho-D-ribosyl)glycinamide (formate route): step 1/1.</text>
</comment>
<comment type="subunit">
    <text evidence="1">Homodimer.</text>
</comment>
<comment type="similarity">
    <text evidence="1">Belongs to the PurK/PurT family.</text>
</comment>
<reference key="1">
    <citation type="submission" date="2008-01" db="EMBL/GenBank/DDBJ databases">
        <title>Complete sequence of Pseudomonas putida GB-1.</title>
        <authorList>
            <consortium name="US DOE Joint Genome Institute"/>
            <person name="Copeland A."/>
            <person name="Lucas S."/>
            <person name="Lapidus A."/>
            <person name="Barry K."/>
            <person name="Glavina del Rio T."/>
            <person name="Dalin E."/>
            <person name="Tice H."/>
            <person name="Pitluck S."/>
            <person name="Bruce D."/>
            <person name="Goodwin L."/>
            <person name="Chertkov O."/>
            <person name="Brettin T."/>
            <person name="Detter J.C."/>
            <person name="Han C."/>
            <person name="Kuske C.R."/>
            <person name="Schmutz J."/>
            <person name="Larimer F."/>
            <person name="Land M."/>
            <person name="Hauser L."/>
            <person name="Kyrpides N."/>
            <person name="Kim E."/>
            <person name="McCarthy J.K."/>
            <person name="Richardson P."/>
        </authorList>
    </citation>
    <scope>NUCLEOTIDE SEQUENCE [LARGE SCALE GENOMIC DNA]</scope>
    <source>
        <strain>GB-1</strain>
    </source>
</reference>
<organism>
    <name type="scientific">Pseudomonas putida (strain GB-1)</name>
    <dbReference type="NCBI Taxonomy" id="76869"/>
    <lineage>
        <taxon>Bacteria</taxon>
        <taxon>Pseudomonadati</taxon>
        <taxon>Pseudomonadota</taxon>
        <taxon>Gammaproteobacteria</taxon>
        <taxon>Pseudomonadales</taxon>
        <taxon>Pseudomonadaceae</taxon>
        <taxon>Pseudomonas</taxon>
    </lineage>
</organism>
<evidence type="ECO:0000255" key="1">
    <source>
        <dbReference type="HAMAP-Rule" id="MF_01643"/>
    </source>
</evidence>
<accession>B0KRH6</accession>
<keyword id="KW-0067">ATP-binding</keyword>
<keyword id="KW-0436">Ligase</keyword>
<keyword id="KW-0460">Magnesium</keyword>
<keyword id="KW-0479">Metal-binding</keyword>
<keyword id="KW-0547">Nucleotide-binding</keyword>
<keyword id="KW-0658">Purine biosynthesis</keyword>
<feature type="chain" id="PRO_1000186888" description="Formate-dependent phosphoribosylglycinamide formyltransferase">
    <location>
        <begin position="1"/>
        <end position="393"/>
    </location>
</feature>
<feature type="domain" description="ATP-grasp" evidence="1">
    <location>
        <begin position="119"/>
        <end position="308"/>
    </location>
</feature>
<feature type="binding site" evidence="1">
    <location>
        <begin position="22"/>
        <end position="23"/>
    </location>
    <ligand>
        <name>N(1)-(5-phospho-beta-D-ribosyl)glycinamide</name>
        <dbReference type="ChEBI" id="CHEBI:143788"/>
    </ligand>
</feature>
<feature type="binding site" evidence="1">
    <location>
        <position position="82"/>
    </location>
    <ligand>
        <name>N(1)-(5-phospho-beta-D-ribosyl)glycinamide</name>
        <dbReference type="ChEBI" id="CHEBI:143788"/>
    </ligand>
</feature>
<feature type="binding site" evidence="1">
    <location>
        <position position="114"/>
    </location>
    <ligand>
        <name>ATP</name>
        <dbReference type="ChEBI" id="CHEBI:30616"/>
    </ligand>
</feature>
<feature type="binding site" evidence="1">
    <location>
        <position position="155"/>
    </location>
    <ligand>
        <name>ATP</name>
        <dbReference type="ChEBI" id="CHEBI:30616"/>
    </ligand>
</feature>
<feature type="binding site" evidence="1">
    <location>
        <begin position="160"/>
        <end position="165"/>
    </location>
    <ligand>
        <name>ATP</name>
        <dbReference type="ChEBI" id="CHEBI:30616"/>
    </ligand>
</feature>
<feature type="binding site" evidence="1">
    <location>
        <begin position="195"/>
        <end position="198"/>
    </location>
    <ligand>
        <name>ATP</name>
        <dbReference type="ChEBI" id="CHEBI:30616"/>
    </ligand>
</feature>
<feature type="binding site" evidence="1">
    <location>
        <position position="203"/>
    </location>
    <ligand>
        <name>ATP</name>
        <dbReference type="ChEBI" id="CHEBI:30616"/>
    </ligand>
</feature>
<feature type="binding site" evidence="1">
    <location>
        <position position="267"/>
    </location>
    <ligand>
        <name>Mg(2+)</name>
        <dbReference type="ChEBI" id="CHEBI:18420"/>
    </ligand>
</feature>
<feature type="binding site" evidence="1">
    <location>
        <position position="279"/>
    </location>
    <ligand>
        <name>Mg(2+)</name>
        <dbReference type="ChEBI" id="CHEBI:18420"/>
    </ligand>
</feature>
<feature type="binding site" evidence="1">
    <location>
        <position position="286"/>
    </location>
    <ligand>
        <name>N(1)-(5-phospho-beta-D-ribosyl)glycinamide</name>
        <dbReference type="ChEBI" id="CHEBI:143788"/>
    </ligand>
</feature>
<feature type="binding site" evidence="1">
    <location>
        <position position="356"/>
    </location>
    <ligand>
        <name>N(1)-(5-phospho-beta-D-ribosyl)glycinamide</name>
        <dbReference type="ChEBI" id="CHEBI:143788"/>
    </ligand>
</feature>
<feature type="binding site" evidence="1">
    <location>
        <begin position="363"/>
        <end position="364"/>
    </location>
    <ligand>
        <name>N(1)-(5-phospho-beta-D-ribosyl)glycinamide</name>
        <dbReference type="ChEBI" id="CHEBI:143788"/>
    </ligand>
</feature>
<gene>
    <name evidence="1" type="primary">purT</name>
    <name type="ordered locus">PputGB1_1062</name>
</gene>